<feature type="initiator methionine" description="Removed" evidence="1">
    <location>
        <position position="1"/>
    </location>
</feature>
<feature type="chain" id="PRO_0000425022" description="Profilin-3">
    <location>
        <begin position="2"/>
        <end position="134"/>
    </location>
</feature>
<feature type="short sequence motif" description="Involved in PIP2 interaction">
    <location>
        <begin position="84"/>
        <end position="100"/>
    </location>
</feature>
<feature type="modified residue" description="Phosphothreonine" evidence="1">
    <location>
        <position position="114"/>
    </location>
</feature>
<feature type="disulfide bond" evidence="3">
    <location>
        <begin position="13"/>
        <end position="118"/>
    </location>
</feature>
<evidence type="ECO:0000250" key="1"/>
<evidence type="ECO:0000305" key="2"/>
<evidence type="ECO:0000305" key="3">
    <source>
    </source>
</evidence>
<protein>
    <recommendedName>
        <fullName>Profilin-3</fullName>
    </recommendedName>
    <alternativeName>
        <fullName>Pollen allergen Ole e 2</fullName>
    </alternativeName>
    <allergenName>Ole e 2</allergenName>
</protein>
<comment type="function">
    <text evidence="1">Binds to actin and affects the structure of the cytoskeleton. At high concentrations, profilin prevents the polymerization of actin, whereas it enhances it at low concentrations (By similarity).</text>
</comment>
<comment type="subunit">
    <text evidence="1">Occurs in many kinds of cells as a complex with monomeric actin in a 1:1 ratio.</text>
</comment>
<comment type="subcellular location">
    <subcellularLocation>
        <location evidence="1">Cytoplasm</location>
        <location evidence="1">Cytoskeleton</location>
    </subcellularLocation>
</comment>
<comment type="PTM">
    <text evidence="1">Phosphorylated by MAP kinases.</text>
</comment>
<comment type="polymorphism">
    <text>Several isoforms of the allergen exist due to polymorphism.</text>
</comment>
<comment type="allergen">
    <text>Causes an allergic reaction in human.</text>
</comment>
<comment type="miscellaneous">
    <text evidence="3">The variability of the residues taking part of IgE-binding epitopes might be responsible of the difference in cross-reactivity among olive pollen cultivars, and between distantly related pollen species, leading to a variable range of allergy reactions among atopic patients.</text>
</comment>
<comment type="similarity">
    <text evidence="2">Belongs to the profilin family.</text>
</comment>
<proteinExistence type="evidence at protein level"/>
<sequence length="134" mass="14471">MSWQTYVDDHLMCDIEDHEGHRLTAAAIVGHDGSVWAQSATFPQFKPEEMNGIMTDFNEPGHLAPTGLHLGGTKYMVIQGEAGAVIRGKKGSGGITIKKTGQALVCGIYEEPVTPGQCNMVVERLGDYLLEQGL</sequence>
<accession>A4GDT1</accession>
<name>PROBE_OLEEU</name>
<dbReference type="EMBL" id="DQ138349">
    <property type="protein sequence ID" value="AAZ30427.1"/>
    <property type="molecule type" value="mRNA"/>
</dbReference>
<dbReference type="SMR" id="A4GDT1"/>
<dbReference type="Allergome" id="490">
    <property type="allergen name" value="Ole e 2"/>
</dbReference>
<dbReference type="GO" id="GO:0005938">
    <property type="term" value="C:cell cortex"/>
    <property type="evidence" value="ECO:0007669"/>
    <property type="project" value="TreeGrafter"/>
</dbReference>
<dbReference type="GO" id="GO:0005856">
    <property type="term" value="C:cytoskeleton"/>
    <property type="evidence" value="ECO:0007669"/>
    <property type="project" value="UniProtKB-SubCell"/>
</dbReference>
<dbReference type="GO" id="GO:0003785">
    <property type="term" value="F:actin monomer binding"/>
    <property type="evidence" value="ECO:0007669"/>
    <property type="project" value="TreeGrafter"/>
</dbReference>
<dbReference type="CDD" id="cd00148">
    <property type="entry name" value="PROF"/>
    <property type="match status" value="1"/>
</dbReference>
<dbReference type="FunFam" id="3.30.450.30:FF:000001">
    <property type="entry name" value="Profilin"/>
    <property type="match status" value="1"/>
</dbReference>
<dbReference type="Gene3D" id="3.30.450.30">
    <property type="entry name" value="Dynein light chain 2a, cytoplasmic"/>
    <property type="match status" value="1"/>
</dbReference>
<dbReference type="InterPro" id="IPR048278">
    <property type="entry name" value="PFN"/>
</dbReference>
<dbReference type="InterPro" id="IPR005455">
    <property type="entry name" value="PFN_euk"/>
</dbReference>
<dbReference type="InterPro" id="IPR036140">
    <property type="entry name" value="PFN_sf"/>
</dbReference>
<dbReference type="InterPro" id="IPR027310">
    <property type="entry name" value="Profilin_CS"/>
</dbReference>
<dbReference type="PANTHER" id="PTHR11604">
    <property type="entry name" value="PROFILIN"/>
    <property type="match status" value="1"/>
</dbReference>
<dbReference type="PANTHER" id="PTHR11604:SF25">
    <property type="entry name" value="PROFILIN-5"/>
    <property type="match status" value="1"/>
</dbReference>
<dbReference type="Pfam" id="PF00235">
    <property type="entry name" value="Profilin"/>
    <property type="match status" value="1"/>
</dbReference>
<dbReference type="PRINTS" id="PR00392">
    <property type="entry name" value="PROFILIN"/>
</dbReference>
<dbReference type="PRINTS" id="PR01640">
    <property type="entry name" value="PROFILINPLNT"/>
</dbReference>
<dbReference type="SMART" id="SM00392">
    <property type="entry name" value="PROF"/>
    <property type="match status" value="1"/>
</dbReference>
<dbReference type="SUPFAM" id="SSF55770">
    <property type="entry name" value="Profilin (actin-binding protein)"/>
    <property type="match status" value="1"/>
</dbReference>
<dbReference type="PROSITE" id="PS00414">
    <property type="entry name" value="PROFILIN"/>
    <property type="match status" value="1"/>
</dbReference>
<organism>
    <name type="scientific">Olea europaea</name>
    <name type="common">Common olive</name>
    <dbReference type="NCBI Taxonomy" id="4146"/>
    <lineage>
        <taxon>Eukaryota</taxon>
        <taxon>Viridiplantae</taxon>
        <taxon>Streptophyta</taxon>
        <taxon>Embryophyta</taxon>
        <taxon>Tracheophyta</taxon>
        <taxon>Spermatophyta</taxon>
        <taxon>Magnoliopsida</taxon>
        <taxon>eudicotyledons</taxon>
        <taxon>Gunneridae</taxon>
        <taxon>Pentapetalae</taxon>
        <taxon>asterids</taxon>
        <taxon>lamiids</taxon>
        <taxon>Lamiales</taxon>
        <taxon>Oleaceae</taxon>
        <taxon>Oleeae</taxon>
        <taxon>Olea</taxon>
    </lineage>
</organism>
<keyword id="KW-0009">Actin-binding</keyword>
<keyword id="KW-0020">Allergen</keyword>
<keyword id="KW-0963">Cytoplasm</keyword>
<keyword id="KW-0206">Cytoskeleton</keyword>
<keyword id="KW-1015">Disulfide bond</keyword>
<keyword id="KW-0597">Phosphoprotein</keyword>
<reference key="1">
    <citation type="journal article" date="2012" name="PLoS ONE">
        <title>Characterization of profilin polymorphism in pollen with a focus on multifunctionality.</title>
        <authorList>
            <person name="Jimenez-Lopez J.C."/>
            <person name="Morales S."/>
            <person name="Castro A.J."/>
            <person name="Volkmann D."/>
            <person name="Rodriguez-Garcia M.I."/>
            <person name="Alche Jde D."/>
        </authorList>
    </citation>
    <scope>NUCLEOTIDE SEQUENCE [MRNA]</scope>
    <scope>POLYMORPHISM</scope>
    <source>
        <strain>cv. Sevillenca</strain>
    </source>
</reference>
<reference key="2">
    <citation type="journal article" date="2013" name="PLoS ONE">
        <title>Analysis of the effects of polymorphism on pollen profilin structural functionality and the generation of conformational, T- and B-cell epitopes.</title>
        <authorList>
            <person name="Jimenez-Lopez J.C."/>
            <person name="Rodriguez-Garcia M.I."/>
            <person name="Alche J.D."/>
        </authorList>
    </citation>
    <scope>3D-STRUCTURE MODELING</scope>
    <scope>DISULFIDE BOND</scope>
</reference>